<organism>
    <name type="scientific">Escherichia coli (strain SE11)</name>
    <dbReference type="NCBI Taxonomy" id="409438"/>
    <lineage>
        <taxon>Bacteria</taxon>
        <taxon>Pseudomonadati</taxon>
        <taxon>Pseudomonadota</taxon>
        <taxon>Gammaproteobacteria</taxon>
        <taxon>Enterobacterales</taxon>
        <taxon>Enterobacteriaceae</taxon>
        <taxon>Escherichia</taxon>
    </lineage>
</organism>
<accession>B6I7Z9</accession>
<comment type="function">
    <text evidence="1">Succinyl-CoA synthetase functions in the citric acid cycle (TCA), coupling the hydrolysis of succinyl-CoA to the synthesis of either ATP or GTP and thus represents the only step of substrate-level phosphorylation in the TCA. The beta subunit provides nucleotide specificity of the enzyme and binds the substrate succinate, while the binding sites for coenzyme A and phosphate are found in the alpha subunit.</text>
</comment>
<comment type="catalytic activity">
    <reaction evidence="1">
        <text>succinate + ATP + CoA = succinyl-CoA + ADP + phosphate</text>
        <dbReference type="Rhea" id="RHEA:17661"/>
        <dbReference type="ChEBI" id="CHEBI:30031"/>
        <dbReference type="ChEBI" id="CHEBI:30616"/>
        <dbReference type="ChEBI" id="CHEBI:43474"/>
        <dbReference type="ChEBI" id="CHEBI:57287"/>
        <dbReference type="ChEBI" id="CHEBI:57292"/>
        <dbReference type="ChEBI" id="CHEBI:456216"/>
        <dbReference type="EC" id="6.2.1.5"/>
    </reaction>
    <physiologicalReaction direction="right-to-left" evidence="1">
        <dbReference type="Rhea" id="RHEA:17663"/>
    </physiologicalReaction>
</comment>
<comment type="catalytic activity">
    <reaction evidence="1">
        <text>GTP + succinate + CoA = succinyl-CoA + GDP + phosphate</text>
        <dbReference type="Rhea" id="RHEA:22120"/>
        <dbReference type="ChEBI" id="CHEBI:30031"/>
        <dbReference type="ChEBI" id="CHEBI:37565"/>
        <dbReference type="ChEBI" id="CHEBI:43474"/>
        <dbReference type="ChEBI" id="CHEBI:57287"/>
        <dbReference type="ChEBI" id="CHEBI:57292"/>
        <dbReference type="ChEBI" id="CHEBI:58189"/>
    </reaction>
    <physiologicalReaction direction="right-to-left" evidence="1">
        <dbReference type="Rhea" id="RHEA:22122"/>
    </physiologicalReaction>
</comment>
<comment type="cofactor">
    <cofactor evidence="1">
        <name>Mg(2+)</name>
        <dbReference type="ChEBI" id="CHEBI:18420"/>
    </cofactor>
    <text evidence="1">Binds 1 Mg(2+) ion per subunit.</text>
</comment>
<comment type="pathway">
    <text evidence="1">Carbohydrate metabolism; tricarboxylic acid cycle; succinate from succinyl-CoA (ligase route): step 1/1.</text>
</comment>
<comment type="subunit">
    <text evidence="1">Heterotetramer of two alpha and two beta subunits.</text>
</comment>
<comment type="similarity">
    <text evidence="1">Belongs to the succinate/malate CoA ligase beta subunit family.</text>
</comment>
<protein>
    <recommendedName>
        <fullName evidence="1">Succinate--CoA ligase [ADP-forming] subunit beta</fullName>
        <ecNumber evidence="1">6.2.1.5</ecNumber>
    </recommendedName>
    <alternativeName>
        <fullName evidence="1">Succinyl-CoA synthetase subunit beta</fullName>
        <shortName evidence="1">SCS-beta</shortName>
    </alternativeName>
</protein>
<proteinExistence type="inferred from homology"/>
<reference key="1">
    <citation type="journal article" date="2008" name="DNA Res.">
        <title>Complete genome sequence and comparative analysis of the wild-type commensal Escherichia coli strain SE11 isolated from a healthy adult.</title>
        <authorList>
            <person name="Oshima K."/>
            <person name="Toh H."/>
            <person name="Ogura Y."/>
            <person name="Sasamoto H."/>
            <person name="Morita H."/>
            <person name="Park S.-H."/>
            <person name="Ooka T."/>
            <person name="Iyoda S."/>
            <person name="Taylor T.D."/>
            <person name="Hayashi T."/>
            <person name="Itoh K."/>
            <person name="Hattori M."/>
        </authorList>
    </citation>
    <scope>NUCLEOTIDE SEQUENCE [LARGE SCALE GENOMIC DNA]</scope>
    <source>
        <strain>SE11</strain>
    </source>
</reference>
<evidence type="ECO:0000255" key="1">
    <source>
        <dbReference type="HAMAP-Rule" id="MF_00558"/>
    </source>
</evidence>
<name>SUCC_ECOSE</name>
<dbReference type="EC" id="6.2.1.5" evidence="1"/>
<dbReference type="EMBL" id="AP009240">
    <property type="protein sequence ID" value="BAG76311.1"/>
    <property type="molecule type" value="Genomic_DNA"/>
</dbReference>
<dbReference type="RefSeq" id="WP_001048602.1">
    <property type="nucleotide sequence ID" value="NC_011415.1"/>
</dbReference>
<dbReference type="SMR" id="B6I7Z9"/>
<dbReference type="GeneID" id="93776757"/>
<dbReference type="KEGG" id="ecy:ECSE_0787"/>
<dbReference type="HOGENOM" id="CLU_037430_4_0_6"/>
<dbReference type="UniPathway" id="UPA00223">
    <property type="reaction ID" value="UER00999"/>
</dbReference>
<dbReference type="Proteomes" id="UP000008199">
    <property type="component" value="Chromosome"/>
</dbReference>
<dbReference type="GO" id="GO:0005829">
    <property type="term" value="C:cytosol"/>
    <property type="evidence" value="ECO:0007669"/>
    <property type="project" value="TreeGrafter"/>
</dbReference>
<dbReference type="GO" id="GO:0042709">
    <property type="term" value="C:succinate-CoA ligase complex"/>
    <property type="evidence" value="ECO:0007669"/>
    <property type="project" value="TreeGrafter"/>
</dbReference>
<dbReference type="GO" id="GO:0005524">
    <property type="term" value="F:ATP binding"/>
    <property type="evidence" value="ECO:0007669"/>
    <property type="project" value="UniProtKB-UniRule"/>
</dbReference>
<dbReference type="GO" id="GO:0000287">
    <property type="term" value="F:magnesium ion binding"/>
    <property type="evidence" value="ECO:0007669"/>
    <property type="project" value="UniProtKB-UniRule"/>
</dbReference>
<dbReference type="GO" id="GO:0004775">
    <property type="term" value="F:succinate-CoA ligase (ADP-forming) activity"/>
    <property type="evidence" value="ECO:0007669"/>
    <property type="project" value="UniProtKB-UniRule"/>
</dbReference>
<dbReference type="GO" id="GO:0004776">
    <property type="term" value="F:succinate-CoA ligase (GDP-forming) activity"/>
    <property type="evidence" value="ECO:0007669"/>
    <property type="project" value="RHEA"/>
</dbReference>
<dbReference type="GO" id="GO:0006104">
    <property type="term" value="P:succinyl-CoA metabolic process"/>
    <property type="evidence" value="ECO:0007669"/>
    <property type="project" value="TreeGrafter"/>
</dbReference>
<dbReference type="GO" id="GO:0006099">
    <property type="term" value="P:tricarboxylic acid cycle"/>
    <property type="evidence" value="ECO:0007669"/>
    <property type="project" value="UniProtKB-UniRule"/>
</dbReference>
<dbReference type="FunFam" id="3.30.1490.20:FF:000002">
    <property type="entry name" value="Succinate--CoA ligase [ADP-forming] subunit beta"/>
    <property type="match status" value="1"/>
</dbReference>
<dbReference type="FunFam" id="3.30.470.20:FF:000002">
    <property type="entry name" value="Succinate--CoA ligase [ADP-forming] subunit beta"/>
    <property type="match status" value="1"/>
</dbReference>
<dbReference type="FunFam" id="3.40.50.261:FF:000001">
    <property type="entry name" value="Succinate--CoA ligase [ADP-forming] subunit beta"/>
    <property type="match status" value="1"/>
</dbReference>
<dbReference type="Gene3D" id="3.30.1490.20">
    <property type="entry name" value="ATP-grasp fold, A domain"/>
    <property type="match status" value="1"/>
</dbReference>
<dbReference type="Gene3D" id="3.30.470.20">
    <property type="entry name" value="ATP-grasp fold, B domain"/>
    <property type="match status" value="1"/>
</dbReference>
<dbReference type="Gene3D" id="3.40.50.261">
    <property type="entry name" value="Succinyl-CoA synthetase domains"/>
    <property type="match status" value="1"/>
</dbReference>
<dbReference type="HAMAP" id="MF_00558">
    <property type="entry name" value="Succ_CoA_beta"/>
    <property type="match status" value="1"/>
</dbReference>
<dbReference type="InterPro" id="IPR011761">
    <property type="entry name" value="ATP-grasp"/>
</dbReference>
<dbReference type="InterPro" id="IPR013650">
    <property type="entry name" value="ATP-grasp_succ-CoA_synth-type"/>
</dbReference>
<dbReference type="InterPro" id="IPR013815">
    <property type="entry name" value="ATP_grasp_subdomain_1"/>
</dbReference>
<dbReference type="InterPro" id="IPR017866">
    <property type="entry name" value="Succ-CoA_synthase_bsu_CS"/>
</dbReference>
<dbReference type="InterPro" id="IPR005811">
    <property type="entry name" value="SUCC_ACL_C"/>
</dbReference>
<dbReference type="InterPro" id="IPR005809">
    <property type="entry name" value="Succ_CoA_ligase-like_bsu"/>
</dbReference>
<dbReference type="InterPro" id="IPR016102">
    <property type="entry name" value="Succinyl-CoA_synth-like"/>
</dbReference>
<dbReference type="NCBIfam" id="NF001913">
    <property type="entry name" value="PRK00696.1"/>
    <property type="match status" value="1"/>
</dbReference>
<dbReference type="NCBIfam" id="TIGR01016">
    <property type="entry name" value="sucCoAbeta"/>
    <property type="match status" value="1"/>
</dbReference>
<dbReference type="PANTHER" id="PTHR11815:SF10">
    <property type="entry name" value="SUCCINATE--COA LIGASE [GDP-FORMING] SUBUNIT BETA, MITOCHONDRIAL"/>
    <property type="match status" value="1"/>
</dbReference>
<dbReference type="PANTHER" id="PTHR11815">
    <property type="entry name" value="SUCCINYL-COA SYNTHETASE BETA CHAIN"/>
    <property type="match status" value="1"/>
</dbReference>
<dbReference type="Pfam" id="PF08442">
    <property type="entry name" value="ATP-grasp_2"/>
    <property type="match status" value="1"/>
</dbReference>
<dbReference type="Pfam" id="PF00549">
    <property type="entry name" value="Ligase_CoA"/>
    <property type="match status" value="1"/>
</dbReference>
<dbReference type="PIRSF" id="PIRSF001554">
    <property type="entry name" value="SucCS_beta"/>
    <property type="match status" value="1"/>
</dbReference>
<dbReference type="SUPFAM" id="SSF56059">
    <property type="entry name" value="Glutathione synthetase ATP-binding domain-like"/>
    <property type="match status" value="1"/>
</dbReference>
<dbReference type="SUPFAM" id="SSF52210">
    <property type="entry name" value="Succinyl-CoA synthetase domains"/>
    <property type="match status" value="1"/>
</dbReference>
<dbReference type="PROSITE" id="PS50975">
    <property type="entry name" value="ATP_GRASP"/>
    <property type="match status" value="1"/>
</dbReference>
<dbReference type="PROSITE" id="PS01217">
    <property type="entry name" value="SUCCINYL_COA_LIG_3"/>
    <property type="match status" value="1"/>
</dbReference>
<feature type="chain" id="PRO_1000129187" description="Succinate--CoA ligase [ADP-forming] subunit beta">
    <location>
        <begin position="1"/>
        <end position="388"/>
    </location>
</feature>
<feature type="domain" description="ATP-grasp" evidence="1">
    <location>
        <begin position="9"/>
        <end position="244"/>
    </location>
</feature>
<feature type="binding site" evidence="1">
    <location>
        <position position="46"/>
    </location>
    <ligand>
        <name>ATP</name>
        <dbReference type="ChEBI" id="CHEBI:30616"/>
    </ligand>
</feature>
<feature type="binding site" evidence="1">
    <location>
        <begin position="53"/>
        <end position="55"/>
    </location>
    <ligand>
        <name>ATP</name>
        <dbReference type="ChEBI" id="CHEBI:30616"/>
    </ligand>
</feature>
<feature type="binding site" evidence="1">
    <location>
        <position position="99"/>
    </location>
    <ligand>
        <name>ATP</name>
        <dbReference type="ChEBI" id="CHEBI:30616"/>
    </ligand>
</feature>
<feature type="binding site" evidence="1">
    <location>
        <position position="102"/>
    </location>
    <ligand>
        <name>ATP</name>
        <dbReference type="ChEBI" id="CHEBI:30616"/>
    </ligand>
</feature>
<feature type="binding site" evidence="1">
    <location>
        <position position="107"/>
    </location>
    <ligand>
        <name>ATP</name>
        <dbReference type="ChEBI" id="CHEBI:30616"/>
    </ligand>
</feature>
<feature type="binding site" evidence="1">
    <location>
        <position position="199"/>
    </location>
    <ligand>
        <name>Mg(2+)</name>
        <dbReference type="ChEBI" id="CHEBI:18420"/>
    </ligand>
</feature>
<feature type="binding site" evidence="1">
    <location>
        <position position="213"/>
    </location>
    <ligand>
        <name>Mg(2+)</name>
        <dbReference type="ChEBI" id="CHEBI:18420"/>
    </ligand>
</feature>
<feature type="binding site" evidence="1">
    <location>
        <position position="264"/>
    </location>
    <ligand>
        <name>substrate</name>
        <note>ligand shared with subunit alpha</note>
    </ligand>
</feature>
<feature type="binding site" evidence="1">
    <location>
        <begin position="321"/>
        <end position="323"/>
    </location>
    <ligand>
        <name>substrate</name>
        <note>ligand shared with subunit alpha</note>
    </ligand>
</feature>
<sequence>MNLHEYQAKQLFARYGLPAPVGYACTTPREAEEAASKIGAGPWVVKCQVHAGGRGKAGGVKVVNSKEDIRAFAENWLGKRLVTYQTDANGQPVNQILVEAATDIAKELYLGAVVDRSSRRVVFMASTEGGVEIEKVAEETPHLIHKVALDPLTGPMPYQGRELAFKLGLEGKLVQQFTKIFMGLATIFLERDLALIEINPLVITKQGDLICLDGKLGADGNALFRQPDLREMRDQSQEDPREAQAAQWELNYVALDGNIGCMVNGAGLAMGTMDIVKLHGGEPANFLDVGGGATKERVTEAFKIILSDDKVKAVLVNIFGGIVRCDLIADGIIGAVAEVGVNVPVVVRLEGNNAELGAKKLADSGLNIIAAKGLTDAAQQVVAAVEGK</sequence>
<gene>
    <name evidence="1" type="primary">sucC</name>
    <name type="ordered locus">ECSE_0787</name>
</gene>
<keyword id="KW-0067">ATP-binding</keyword>
<keyword id="KW-0436">Ligase</keyword>
<keyword id="KW-0460">Magnesium</keyword>
<keyword id="KW-0479">Metal-binding</keyword>
<keyword id="KW-0547">Nucleotide-binding</keyword>
<keyword id="KW-0816">Tricarboxylic acid cycle</keyword>